<proteinExistence type="evidence at transcript level"/>
<keyword id="KW-0240">DNA-directed RNA polymerase</keyword>
<keyword id="KW-0539">Nucleus</keyword>
<keyword id="KW-1185">Reference proteome</keyword>
<keyword id="KW-0804">Transcription</keyword>
<feature type="chain" id="PRO_0000328174" description="DNA-directed RNA polymerase III subunit rpc8">
    <location>
        <begin position="1"/>
        <end position="252"/>
    </location>
</feature>
<feature type="region of interest" description="Disordered" evidence="2">
    <location>
        <begin position="214"/>
        <end position="252"/>
    </location>
</feature>
<feature type="compositionally biased region" description="Acidic residues" evidence="2">
    <location>
        <begin position="220"/>
        <end position="252"/>
    </location>
</feature>
<accession>Q557J3</accession>
<accession>Q86KI8</accession>
<sequence>MFHLITIEDKVRIAPSQFNNEVQTIEDEIEKKYTSKVVLNAGLFVALYDILGTGDSYVHSGDGGAHLMVRFRMVVFKPFKGEVLEGVIKKSSRQSIQISLGFFHEIYLNPIELPNPSNYNQEEGLWYWEWNENQLFFEDGGRVRFKIDQVEFNPEISQPAPSPKNVNTEAMDSYSLREYKEKQIENENLLKQVKSPLILKVSMREAGLGMVSWWTNQSAGDDDENEEDGGENQDDEVAEDDGGEEPTIEEDE</sequence>
<dbReference type="EMBL" id="AAFI02000010">
    <property type="protein sequence ID" value="EAL70667.1"/>
    <property type="molecule type" value="Genomic_DNA"/>
</dbReference>
<dbReference type="EMBL" id="AAFI02000010">
    <property type="protein sequence ID" value="EAL70716.1"/>
    <property type="molecule type" value="Genomic_DNA"/>
</dbReference>
<dbReference type="SMR" id="Q557J3"/>
<dbReference type="FunCoup" id="Q557J3">
    <property type="interactions" value="659"/>
</dbReference>
<dbReference type="STRING" id="44689.Q557J3"/>
<dbReference type="PaxDb" id="44689-DDB0216296"/>
<dbReference type="EnsemblProtists" id="EAL70667">
    <property type="protein sequence ID" value="EAL70667"/>
    <property type="gene ID" value="DDB_G0273425"/>
</dbReference>
<dbReference type="EnsemblProtists" id="EAL70716">
    <property type="protein sequence ID" value="EAL70716"/>
    <property type="gene ID" value="DDB_G0273523"/>
</dbReference>
<dbReference type="KEGG" id="ddi:DDB_G0273425"/>
<dbReference type="KEGG" id="ddi:DDB_G0273523"/>
<dbReference type="dictyBase" id="DDB_G0273425">
    <property type="gene designation" value="rpc25-1"/>
</dbReference>
<dbReference type="dictyBase" id="DDB_G0273523">
    <property type="gene designation" value="rpc25-2"/>
</dbReference>
<dbReference type="VEuPathDB" id="AmoebaDB:DDB_G0273523"/>
<dbReference type="eggNOG" id="KOG3297">
    <property type="taxonomic scope" value="Eukaryota"/>
</dbReference>
<dbReference type="HOGENOM" id="CLU_073901_1_1_1"/>
<dbReference type="InParanoid" id="Q557J3"/>
<dbReference type="OMA" id="LGPTLWW"/>
<dbReference type="PhylomeDB" id="Q557J3"/>
<dbReference type="Reactome" id="R-DDI-76061">
    <property type="pathway name" value="RNA Polymerase III Transcription Initiation From Type 1 Promoter"/>
</dbReference>
<dbReference type="Reactome" id="R-DDI-76066">
    <property type="pathway name" value="RNA Polymerase III Transcription Initiation From Type 2 Promoter"/>
</dbReference>
<dbReference type="PRO" id="PR:Q557J3"/>
<dbReference type="Proteomes" id="UP000002195">
    <property type="component" value="Chromosome 2"/>
</dbReference>
<dbReference type="GO" id="GO:0005666">
    <property type="term" value="C:RNA polymerase III complex"/>
    <property type="evidence" value="ECO:0000250"/>
    <property type="project" value="dictyBase"/>
</dbReference>
<dbReference type="GO" id="GO:0003899">
    <property type="term" value="F:DNA-directed RNA polymerase activity"/>
    <property type="evidence" value="ECO:0000250"/>
    <property type="project" value="dictyBase"/>
</dbReference>
<dbReference type="GO" id="GO:0006384">
    <property type="term" value="P:transcription initiation at RNA polymerase III promoter"/>
    <property type="evidence" value="ECO:0000250"/>
    <property type="project" value="dictyBase"/>
</dbReference>
<dbReference type="CDD" id="cd04330">
    <property type="entry name" value="RNAP_III_Rpc25_N"/>
    <property type="match status" value="1"/>
</dbReference>
<dbReference type="Gene3D" id="2.40.50.140">
    <property type="entry name" value="Nucleic acid-binding proteins"/>
    <property type="match status" value="1"/>
</dbReference>
<dbReference type="Gene3D" id="3.30.1490.120">
    <property type="entry name" value="RNA polymerase Rpb7-like, N-terminal domain"/>
    <property type="match status" value="1"/>
</dbReference>
<dbReference type="InterPro" id="IPR012340">
    <property type="entry name" value="NA-bd_OB-fold"/>
</dbReference>
<dbReference type="InterPro" id="IPR013238">
    <property type="entry name" value="RNA_pol_III_Rbc25"/>
</dbReference>
<dbReference type="InterPro" id="IPR036898">
    <property type="entry name" value="RNA_pol_Rpb7-like_N_sf"/>
</dbReference>
<dbReference type="InterPro" id="IPR045113">
    <property type="entry name" value="Rpb7-like"/>
</dbReference>
<dbReference type="InterPro" id="IPR005576">
    <property type="entry name" value="Rpb7-like_N"/>
</dbReference>
<dbReference type="PANTHER" id="PTHR12709">
    <property type="entry name" value="DNA-DIRECTED RNA POLYMERASE II, III"/>
    <property type="match status" value="1"/>
</dbReference>
<dbReference type="PANTHER" id="PTHR12709:SF1">
    <property type="entry name" value="DNA-DIRECTED RNA POLYMERASE III SUBUNIT RPC8"/>
    <property type="match status" value="1"/>
</dbReference>
<dbReference type="Pfam" id="PF08292">
    <property type="entry name" value="RNA_pol_Rbc25"/>
    <property type="match status" value="1"/>
</dbReference>
<dbReference type="Pfam" id="PF03876">
    <property type="entry name" value="SHS2_Rpb7-N"/>
    <property type="match status" value="1"/>
</dbReference>
<dbReference type="SUPFAM" id="SSF88798">
    <property type="entry name" value="N-terminal, heterodimerisation domain of RBP7 (RpoE)"/>
    <property type="match status" value="1"/>
</dbReference>
<dbReference type="SUPFAM" id="SSF50249">
    <property type="entry name" value="Nucleic acid-binding proteins"/>
    <property type="match status" value="1"/>
</dbReference>
<protein>
    <recommendedName>
        <fullName>DNA-directed RNA polymerase III subunit rpc8</fullName>
        <shortName>RNA polymerase III subunit C8</shortName>
    </recommendedName>
    <alternativeName>
        <fullName>DNA-directed RNA polymerase III subunit H</fullName>
    </alternativeName>
</protein>
<gene>
    <name type="primary">polr3h-1</name>
    <name type="synonym">rpc25</name>
    <name type="synonym">rpc8</name>
    <name type="ORF">DDB_G0273425</name>
</gene>
<gene>
    <name type="primary">polr3h-2</name>
    <name type="synonym">rpc25</name>
    <name type="synonym">rpc8</name>
    <name type="ORF">DDB_G0273523</name>
</gene>
<comment type="function">
    <text evidence="1">DNA-dependent RNA polymerase catalyzes the transcription of DNA into RNA using the four ribonucleoside triphosphates as substrates.</text>
</comment>
<comment type="subunit">
    <text evidence="1">Component of the RNA polymerase III (Pol III) complex consisting of several subunits.</text>
</comment>
<comment type="subcellular location">
    <subcellularLocation>
        <location evidence="1">Nucleus</location>
    </subcellularLocation>
</comment>
<comment type="similarity">
    <text evidence="3">Belongs to the eukaryotic RPB7/RPC8 RNA polymerase subunit family.</text>
</comment>
<comment type="caution">
    <text evidence="3">The gene for this protein is duplicated in strains AX3 and AX4. These strains contain a duplication of a segment of 750 kb of chromosome 2 compared to the corresponding sequence in strain AX2.</text>
</comment>
<organism>
    <name type="scientific">Dictyostelium discoideum</name>
    <name type="common">Social amoeba</name>
    <dbReference type="NCBI Taxonomy" id="44689"/>
    <lineage>
        <taxon>Eukaryota</taxon>
        <taxon>Amoebozoa</taxon>
        <taxon>Evosea</taxon>
        <taxon>Eumycetozoa</taxon>
        <taxon>Dictyostelia</taxon>
        <taxon>Dictyosteliales</taxon>
        <taxon>Dictyosteliaceae</taxon>
        <taxon>Dictyostelium</taxon>
    </lineage>
</organism>
<name>RPC8_DICDI</name>
<evidence type="ECO:0000250" key="1"/>
<evidence type="ECO:0000256" key="2">
    <source>
        <dbReference type="SAM" id="MobiDB-lite"/>
    </source>
</evidence>
<evidence type="ECO:0000305" key="3"/>
<reference key="1">
    <citation type="journal article" date="2002" name="Nature">
        <title>Sequence and analysis of chromosome 2 of Dictyostelium discoideum.</title>
        <authorList>
            <person name="Gloeckner G."/>
            <person name="Eichinger L."/>
            <person name="Szafranski K."/>
            <person name="Pachebat J.A."/>
            <person name="Bankier A.T."/>
            <person name="Dear P.H."/>
            <person name="Lehmann R."/>
            <person name="Baumgart C."/>
            <person name="Parra G."/>
            <person name="Abril J.F."/>
            <person name="Guigo R."/>
            <person name="Kumpf K."/>
            <person name="Tunggal B."/>
            <person name="Cox E.C."/>
            <person name="Quail M.A."/>
            <person name="Platzer M."/>
            <person name="Rosenthal A."/>
            <person name="Noegel A.A."/>
        </authorList>
    </citation>
    <scope>NUCLEOTIDE SEQUENCE [LARGE SCALE GENOMIC DNA]</scope>
    <source>
        <strain>AX4</strain>
    </source>
</reference>
<reference key="2">
    <citation type="journal article" date="2005" name="Nature">
        <title>The genome of the social amoeba Dictyostelium discoideum.</title>
        <authorList>
            <person name="Eichinger L."/>
            <person name="Pachebat J.A."/>
            <person name="Gloeckner G."/>
            <person name="Rajandream M.A."/>
            <person name="Sucgang R."/>
            <person name="Berriman M."/>
            <person name="Song J."/>
            <person name="Olsen R."/>
            <person name="Szafranski K."/>
            <person name="Xu Q."/>
            <person name="Tunggal B."/>
            <person name="Kummerfeld S."/>
            <person name="Madera M."/>
            <person name="Konfortov B.A."/>
            <person name="Rivero F."/>
            <person name="Bankier A.T."/>
            <person name="Lehmann R."/>
            <person name="Hamlin N."/>
            <person name="Davies R."/>
            <person name="Gaudet P."/>
            <person name="Fey P."/>
            <person name="Pilcher K."/>
            <person name="Chen G."/>
            <person name="Saunders D."/>
            <person name="Sodergren E.J."/>
            <person name="Davis P."/>
            <person name="Kerhornou A."/>
            <person name="Nie X."/>
            <person name="Hall N."/>
            <person name="Anjard C."/>
            <person name="Hemphill L."/>
            <person name="Bason N."/>
            <person name="Farbrother P."/>
            <person name="Desany B."/>
            <person name="Just E."/>
            <person name="Morio T."/>
            <person name="Rost R."/>
            <person name="Churcher C.M."/>
            <person name="Cooper J."/>
            <person name="Haydock S."/>
            <person name="van Driessche N."/>
            <person name="Cronin A."/>
            <person name="Goodhead I."/>
            <person name="Muzny D.M."/>
            <person name="Mourier T."/>
            <person name="Pain A."/>
            <person name="Lu M."/>
            <person name="Harper D."/>
            <person name="Lindsay R."/>
            <person name="Hauser H."/>
            <person name="James K.D."/>
            <person name="Quiles M."/>
            <person name="Madan Babu M."/>
            <person name="Saito T."/>
            <person name="Buchrieser C."/>
            <person name="Wardroper A."/>
            <person name="Felder M."/>
            <person name="Thangavelu M."/>
            <person name="Johnson D."/>
            <person name="Knights A."/>
            <person name="Loulseged H."/>
            <person name="Mungall K.L."/>
            <person name="Oliver K."/>
            <person name="Price C."/>
            <person name="Quail M.A."/>
            <person name="Urushihara H."/>
            <person name="Hernandez J."/>
            <person name="Rabbinowitsch E."/>
            <person name="Steffen D."/>
            <person name="Sanders M."/>
            <person name="Ma J."/>
            <person name="Kohara Y."/>
            <person name="Sharp S."/>
            <person name="Simmonds M.N."/>
            <person name="Spiegler S."/>
            <person name="Tivey A."/>
            <person name="Sugano S."/>
            <person name="White B."/>
            <person name="Walker D."/>
            <person name="Woodward J.R."/>
            <person name="Winckler T."/>
            <person name="Tanaka Y."/>
            <person name="Shaulsky G."/>
            <person name="Schleicher M."/>
            <person name="Weinstock G.M."/>
            <person name="Rosenthal A."/>
            <person name="Cox E.C."/>
            <person name="Chisholm R.L."/>
            <person name="Gibbs R.A."/>
            <person name="Loomis W.F."/>
            <person name="Platzer M."/>
            <person name="Kay R.R."/>
            <person name="Williams J.G."/>
            <person name="Dear P.H."/>
            <person name="Noegel A.A."/>
            <person name="Barrell B.G."/>
            <person name="Kuspa A."/>
        </authorList>
    </citation>
    <scope>NUCLEOTIDE SEQUENCE [LARGE SCALE GENOMIC DNA]</scope>
    <source>
        <strain>AX4</strain>
    </source>
</reference>